<accession>B7M6V6</accession>
<dbReference type="EC" id="2.7.1.5" evidence="1"/>
<dbReference type="EMBL" id="CU928160">
    <property type="protein sequence ID" value="CAR00880.1"/>
    <property type="molecule type" value="Genomic_DNA"/>
</dbReference>
<dbReference type="RefSeq" id="WP_000144118.1">
    <property type="nucleotide sequence ID" value="NC_011741.1"/>
</dbReference>
<dbReference type="SMR" id="B7M6V6"/>
<dbReference type="KEGG" id="ecr:ECIAI1_4109"/>
<dbReference type="HOGENOM" id="CLU_039395_0_0_6"/>
<dbReference type="UniPathway" id="UPA00541">
    <property type="reaction ID" value="UER00602"/>
</dbReference>
<dbReference type="GO" id="GO:0005829">
    <property type="term" value="C:cytosol"/>
    <property type="evidence" value="ECO:0007669"/>
    <property type="project" value="TreeGrafter"/>
</dbReference>
<dbReference type="GO" id="GO:0005524">
    <property type="term" value="F:ATP binding"/>
    <property type="evidence" value="ECO:0007669"/>
    <property type="project" value="UniProtKB-KW"/>
</dbReference>
<dbReference type="GO" id="GO:0004370">
    <property type="term" value="F:glycerol kinase activity"/>
    <property type="evidence" value="ECO:0007669"/>
    <property type="project" value="TreeGrafter"/>
</dbReference>
<dbReference type="GO" id="GO:0008993">
    <property type="term" value="F:rhamnulokinase activity"/>
    <property type="evidence" value="ECO:0007669"/>
    <property type="project" value="UniProtKB-UniRule"/>
</dbReference>
<dbReference type="GO" id="GO:0006071">
    <property type="term" value="P:glycerol metabolic process"/>
    <property type="evidence" value="ECO:0007669"/>
    <property type="project" value="TreeGrafter"/>
</dbReference>
<dbReference type="GO" id="GO:0019301">
    <property type="term" value="P:rhamnose catabolic process"/>
    <property type="evidence" value="ECO:0007669"/>
    <property type="project" value="UniProtKB-UniRule"/>
</dbReference>
<dbReference type="CDD" id="cd07771">
    <property type="entry name" value="ASKHA_NBD_FGGY_RhaB-like"/>
    <property type="match status" value="1"/>
</dbReference>
<dbReference type="FunFam" id="3.30.420.40:FF:000064">
    <property type="entry name" value="Rhamnulokinase"/>
    <property type="match status" value="1"/>
</dbReference>
<dbReference type="FunFam" id="3.30.420.40:FF:000073">
    <property type="entry name" value="Rhamnulokinase"/>
    <property type="match status" value="1"/>
</dbReference>
<dbReference type="Gene3D" id="3.30.420.40">
    <property type="match status" value="2"/>
</dbReference>
<dbReference type="HAMAP" id="MF_01535">
    <property type="entry name" value="Rhamnulokinase"/>
    <property type="match status" value="1"/>
</dbReference>
<dbReference type="InterPro" id="IPR043129">
    <property type="entry name" value="ATPase_NBD"/>
</dbReference>
<dbReference type="InterPro" id="IPR018485">
    <property type="entry name" value="FGGY_C"/>
</dbReference>
<dbReference type="InterPro" id="IPR018484">
    <property type="entry name" value="FGGY_N"/>
</dbReference>
<dbReference type="InterPro" id="IPR013449">
    <property type="entry name" value="Rhamnulokinase"/>
</dbReference>
<dbReference type="NCBIfam" id="NF007925">
    <property type="entry name" value="PRK10640.1"/>
    <property type="match status" value="1"/>
</dbReference>
<dbReference type="NCBIfam" id="TIGR02627">
    <property type="entry name" value="rhamnulo_kin"/>
    <property type="match status" value="1"/>
</dbReference>
<dbReference type="PANTHER" id="PTHR10196:SF93">
    <property type="entry name" value="L-RHAMNULOKINASE"/>
    <property type="match status" value="1"/>
</dbReference>
<dbReference type="PANTHER" id="PTHR10196">
    <property type="entry name" value="SUGAR KINASE"/>
    <property type="match status" value="1"/>
</dbReference>
<dbReference type="Pfam" id="PF02782">
    <property type="entry name" value="FGGY_C"/>
    <property type="match status" value="1"/>
</dbReference>
<dbReference type="Pfam" id="PF00370">
    <property type="entry name" value="FGGY_N"/>
    <property type="match status" value="1"/>
</dbReference>
<dbReference type="SUPFAM" id="SSF53067">
    <property type="entry name" value="Actin-like ATPase domain"/>
    <property type="match status" value="2"/>
</dbReference>
<comment type="function">
    <text evidence="1">Involved in the catabolism of L-rhamnose (6-deoxy-L-mannose). Catalyzes the transfer of the gamma-phosphate group from ATP to the 1-hydroxyl group of L-rhamnulose to yield L-rhamnulose 1-phosphate.</text>
</comment>
<comment type="catalytic activity">
    <reaction evidence="1">
        <text>L-rhamnulose + ATP = L-rhamnulose 1-phosphate + ADP + H(+)</text>
        <dbReference type="Rhea" id="RHEA:20117"/>
        <dbReference type="ChEBI" id="CHEBI:15378"/>
        <dbReference type="ChEBI" id="CHEBI:17897"/>
        <dbReference type="ChEBI" id="CHEBI:30616"/>
        <dbReference type="ChEBI" id="CHEBI:58313"/>
        <dbReference type="ChEBI" id="CHEBI:456216"/>
        <dbReference type="EC" id="2.7.1.5"/>
    </reaction>
</comment>
<comment type="cofactor">
    <cofactor evidence="1">
        <name>Mg(2+)</name>
        <dbReference type="ChEBI" id="CHEBI:18420"/>
    </cofactor>
</comment>
<comment type="pathway">
    <text evidence="1">Carbohydrate degradation; L-rhamnose degradation; glycerone phosphate from L-rhamnose: step 2/3.</text>
</comment>
<comment type="subunit">
    <text evidence="1">Monomer.</text>
</comment>
<comment type="similarity">
    <text evidence="1">Belongs to the rhamnulokinase family.</text>
</comment>
<sequence length="489" mass="54049">MTFRNCVAVDLGASSGRVMLARYQRECRSLTLREIHRFKNGLHSQNGYVTWNVDSLESAIRLGLNKVCEEGIRIDSIGIDTWGVDFVLLDQQGQRVGLPVAYRDSRSNGLMAQAQQQLGKRDIYQRSGIQFLPFNTLYQLRALTEQQPELIPHIAHALLMPDYFSYRLTGKMNWEYTNATTTQLVNINSDDWDESLLAWSGANKAWFGRPTHPGNVIGHWICPQGNEIPVVAVASHDTASAVIASPLNGSRAAYLSSGTWSLMGFESQTPFTNDTALAANITNEGGAEGRYRVLKNIMGLWLLQRVLQERQINDLPALIAATQALPACRFIINPNDDRFINPEAMCSEIQAACRETAQPIPESDAELARCIFDSLALLYADVLHELAQLRGEDFSQLHIVGGGCQNTLLNQLCADACGIRVIAGPVEASTLGNIGIQLMTLDELNNVDDFRQVVSTTANLTTFTPNPDSEIAHYVAQIHSTRQTKELCA</sequence>
<gene>
    <name evidence="1" type="primary">rhaB</name>
    <name type="ordered locus">ECIAI1_4109</name>
</gene>
<reference key="1">
    <citation type="journal article" date="2009" name="PLoS Genet.">
        <title>Organised genome dynamics in the Escherichia coli species results in highly diverse adaptive paths.</title>
        <authorList>
            <person name="Touchon M."/>
            <person name="Hoede C."/>
            <person name="Tenaillon O."/>
            <person name="Barbe V."/>
            <person name="Baeriswyl S."/>
            <person name="Bidet P."/>
            <person name="Bingen E."/>
            <person name="Bonacorsi S."/>
            <person name="Bouchier C."/>
            <person name="Bouvet O."/>
            <person name="Calteau A."/>
            <person name="Chiapello H."/>
            <person name="Clermont O."/>
            <person name="Cruveiller S."/>
            <person name="Danchin A."/>
            <person name="Diard M."/>
            <person name="Dossat C."/>
            <person name="Karoui M.E."/>
            <person name="Frapy E."/>
            <person name="Garry L."/>
            <person name="Ghigo J.M."/>
            <person name="Gilles A.M."/>
            <person name="Johnson J."/>
            <person name="Le Bouguenec C."/>
            <person name="Lescat M."/>
            <person name="Mangenot S."/>
            <person name="Martinez-Jehanne V."/>
            <person name="Matic I."/>
            <person name="Nassif X."/>
            <person name="Oztas S."/>
            <person name="Petit M.A."/>
            <person name="Pichon C."/>
            <person name="Rouy Z."/>
            <person name="Ruf C.S."/>
            <person name="Schneider D."/>
            <person name="Tourret J."/>
            <person name="Vacherie B."/>
            <person name="Vallenet D."/>
            <person name="Medigue C."/>
            <person name="Rocha E.P.C."/>
            <person name="Denamur E."/>
        </authorList>
    </citation>
    <scope>NUCLEOTIDE SEQUENCE [LARGE SCALE GENOMIC DNA]</scope>
    <source>
        <strain>IAI1</strain>
    </source>
</reference>
<organism>
    <name type="scientific">Escherichia coli O8 (strain IAI1)</name>
    <dbReference type="NCBI Taxonomy" id="585034"/>
    <lineage>
        <taxon>Bacteria</taxon>
        <taxon>Pseudomonadati</taxon>
        <taxon>Pseudomonadota</taxon>
        <taxon>Gammaproteobacteria</taxon>
        <taxon>Enterobacterales</taxon>
        <taxon>Enterobacteriaceae</taxon>
        <taxon>Escherichia</taxon>
    </lineage>
</organism>
<feature type="chain" id="PRO_1000146541" description="Rhamnulokinase">
    <location>
        <begin position="1"/>
        <end position="489"/>
    </location>
</feature>
<feature type="active site" description="Proton acceptor" evidence="1">
    <location>
        <position position="237"/>
    </location>
</feature>
<feature type="binding site" evidence="1">
    <location>
        <begin position="13"/>
        <end position="17"/>
    </location>
    <ligand>
        <name>ATP</name>
        <dbReference type="ChEBI" id="CHEBI:30616"/>
    </ligand>
</feature>
<feature type="binding site" evidence="1">
    <location>
        <position position="83"/>
    </location>
    <ligand>
        <name>substrate</name>
    </ligand>
</feature>
<feature type="binding site" evidence="1">
    <location>
        <begin position="236"/>
        <end position="238"/>
    </location>
    <ligand>
        <name>substrate</name>
    </ligand>
</feature>
<feature type="binding site" evidence="1">
    <location>
        <position position="259"/>
    </location>
    <ligand>
        <name>ATP</name>
        <dbReference type="ChEBI" id="CHEBI:30616"/>
    </ligand>
</feature>
<feature type="binding site" evidence="1">
    <location>
        <position position="296"/>
    </location>
    <ligand>
        <name>substrate</name>
    </ligand>
</feature>
<feature type="binding site" evidence="1">
    <location>
        <position position="304"/>
    </location>
    <ligand>
        <name>ATP</name>
        <dbReference type="ChEBI" id="CHEBI:30616"/>
    </ligand>
</feature>
<feature type="binding site" evidence="1">
    <location>
        <position position="402"/>
    </location>
    <ligand>
        <name>ATP</name>
        <dbReference type="ChEBI" id="CHEBI:30616"/>
    </ligand>
</feature>
<feature type="disulfide bond" evidence="1">
    <location>
        <begin position="68"/>
        <end position="222"/>
    </location>
</feature>
<feature type="disulfide bond" evidence="1">
    <location>
        <begin position="353"/>
        <end position="370"/>
    </location>
</feature>
<feature type="disulfide bond" evidence="1">
    <location>
        <begin position="413"/>
        <end position="417"/>
    </location>
</feature>
<name>RHAB_ECO8A</name>
<evidence type="ECO:0000255" key="1">
    <source>
        <dbReference type="HAMAP-Rule" id="MF_01535"/>
    </source>
</evidence>
<proteinExistence type="inferred from homology"/>
<protein>
    <recommendedName>
        <fullName evidence="1">Rhamnulokinase</fullName>
        <shortName evidence="1">RhaB</shortName>
        <ecNumber evidence="1">2.7.1.5</ecNumber>
    </recommendedName>
    <alternativeName>
        <fullName evidence="1">ATP:L-rhamnulose phosphotransferase</fullName>
    </alternativeName>
    <alternativeName>
        <fullName evidence="1">L-rhamnulose 1-kinase</fullName>
    </alternativeName>
    <alternativeName>
        <fullName evidence="1">Rhamnulose kinase</fullName>
    </alternativeName>
</protein>
<keyword id="KW-0067">ATP-binding</keyword>
<keyword id="KW-1015">Disulfide bond</keyword>
<keyword id="KW-0418">Kinase</keyword>
<keyword id="KW-0460">Magnesium</keyword>
<keyword id="KW-0547">Nucleotide-binding</keyword>
<keyword id="KW-0684">Rhamnose metabolism</keyword>
<keyword id="KW-0808">Transferase</keyword>